<accession>P61976</accession>
<comment type="function">
    <text evidence="1">Catalyzes the reversible oxidation of malate to oxaloacetate.</text>
</comment>
<comment type="catalytic activity">
    <reaction evidence="1">
        <text>(S)-malate + NAD(+) = oxaloacetate + NADH + H(+)</text>
        <dbReference type="Rhea" id="RHEA:21432"/>
        <dbReference type="ChEBI" id="CHEBI:15378"/>
        <dbReference type="ChEBI" id="CHEBI:15589"/>
        <dbReference type="ChEBI" id="CHEBI:16452"/>
        <dbReference type="ChEBI" id="CHEBI:57540"/>
        <dbReference type="ChEBI" id="CHEBI:57945"/>
        <dbReference type="EC" id="1.1.1.37"/>
    </reaction>
</comment>
<comment type="similarity">
    <text evidence="1">Belongs to the LDH/MDH superfamily. MDH type 2 family.</text>
</comment>
<reference key="1">
    <citation type="journal article" date="2005" name="Proc. Natl. Acad. Sci. U.S.A.">
        <title>The complete genome sequence of Mycobacterium avium subspecies paratuberculosis.</title>
        <authorList>
            <person name="Li L."/>
            <person name="Bannantine J.P."/>
            <person name="Zhang Q."/>
            <person name="Amonsin A."/>
            <person name="May B.J."/>
            <person name="Alt D."/>
            <person name="Banerji N."/>
            <person name="Kanjilal S."/>
            <person name="Kapur V."/>
        </authorList>
    </citation>
    <scope>NUCLEOTIDE SEQUENCE [LARGE SCALE GENOMIC DNA]</scope>
    <source>
        <strain>ATCC BAA-968 / K-10</strain>
    </source>
</reference>
<evidence type="ECO:0000255" key="1">
    <source>
        <dbReference type="HAMAP-Rule" id="MF_01517"/>
    </source>
</evidence>
<gene>
    <name evidence="1" type="primary">mdh</name>
    <name type="ordered locus">MAP_2541c</name>
</gene>
<feature type="chain" id="PRO_0000113379" description="Malate dehydrogenase">
    <location>
        <begin position="1"/>
        <end position="329"/>
    </location>
</feature>
<feature type="active site" description="Proton acceptor" evidence="1">
    <location>
        <position position="188"/>
    </location>
</feature>
<feature type="binding site" evidence="1">
    <location>
        <begin position="12"/>
        <end position="18"/>
    </location>
    <ligand>
        <name>NAD(+)</name>
        <dbReference type="ChEBI" id="CHEBI:57540"/>
    </ligand>
</feature>
<feature type="binding site" evidence="1">
    <location>
        <position position="93"/>
    </location>
    <ligand>
        <name>substrate</name>
    </ligand>
</feature>
<feature type="binding site" evidence="1">
    <location>
        <position position="99"/>
    </location>
    <ligand>
        <name>substrate</name>
    </ligand>
</feature>
<feature type="binding site" evidence="1">
    <location>
        <position position="106"/>
    </location>
    <ligand>
        <name>NAD(+)</name>
        <dbReference type="ChEBI" id="CHEBI:57540"/>
    </ligand>
</feature>
<feature type="binding site" evidence="1">
    <location>
        <position position="113"/>
    </location>
    <ligand>
        <name>NAD(+)</name>
        <dbReference type="ChEBI" id="CHEBI:57540"/>
    </ligand>
</feature>
<feature type="binding site" evidence="1">
    <location>
        <begin position="130"/>
        <end position="132"/>
    </location>
    <ligand>
        <name>NAD(+)</name>
        <dbReference type="ChEBI" id="CHEBI:57540"/>
    </ligand>
</feature>
<feature type="binding site" evidence="1">
    <location>
        <position position="132"/>
    </location>
    <ligand>
        <name>substrate</name>
    </ligand>
</feature>
<feature type="binding site" evidence="1">
    <location>
        <position position="163"/>
    </location>
    <ligand>
        <name>substrate</name>
    </ligand>
</feature>
<name>MDH_MYCPA</name>
<proteinExistence type="inferred from homology"/>
<dbReference type="EC" id="1.1.1.37" evidence="1"/>
<dbReference type="EMBL" id="AE016958">
    <property type="protein sequence ID" value="AAS04858.1"/>
    <property type="molecule type" value="Genomic_DNA"/>
</dbReference>
<dbReference type="RefSeq" id="WP_003875539.1">
    <property type="nucleotide sequence ID" value="NZ_CP106873.1"/>
</dbReference>
<dbReference type="SMR" id="P61976"/>
<dbReference type="STRING" id="262316.MAP_2541c"/>
<dbReference type="KEGG" id="mpa:MAP_2541c"/>
<dbReference type="eggNOG" id="COG0039">
    <property type="taxonomic scope" value="Bacteria"/>
</dbReference>
<dbReference type="HOGENOM" id="CLU_040727_2_0_11"/>
<dbReference type="Proteomes" id="UP000000580">
    <property type="component" value="Chromosome"/>
</dbReference>
<dbReference type="GO" id="GO:0030060">
    <property type="term" value="F:L-malate dehydrogenase (NAD+) activity"/>
    <property type="evidence" value="ECO:0007669"/>
    <property type="project" value="UniProtKB-UniRule"/>
</dbReference>
<dbReference type="GO" id="GO:0006108">
    <property type="term" value="P:malate metabolic process"/>
    <property type="evidence" value="ECO:0007669"/>
    <property type="project" value="InterPro"/>
</dbReference>
<dbReference type="GO" id="GO:0006099">
    <property type="term" value="P:tricarboxylic acid cycle"/>
    <property type="evidence" value="ECO:0007669"/>
    <property type="project" value="UniProtKB-UniRule"/>
</dbReference>
<dbReference type="CDD" id="cd01338">
    <property type="entry name" value="MDH_chloroplast-like"/>
    <property type="match status" value="1"/>
</dbReference>
<dbReference type="FunFam" id="3.40.50.720:FF:000010">
    <property type="entry name" value="Malate dehydrogenase"/>
    <property type="match status" value="1"/>
</dbReference>
<dbReference type="FunFam" id="3.90.110.10:FF:000002">
    <property type="entry name" value="Malate dehydrogenase"/>
    <property type="match status" value="1"/>
</dbReference>
<dbReference type="Gene3D" id="3.90.110.10">
    <property type="entry name" value="Lactate dehydrogenase/glycoside hydrolase, family 4, C-terminal"/>
    <property type="match status" value="1"/>
</dbReference>
<dbReference type="Gene3D" id="3.40.50.720">
    <property type="entry name" value="NAD(P)-binding Rossmann-like Domain"/>
    <property type="match status" value="1"/>
</dbReference>
<dbReference type="HAMAP" id="MF_01517">
    <property type="entry name" value="Malate_dehydrog_2"/>
    <property type="match status" value="1"/>
</dbReference>
<dbReference type="InterPro" id="IPR001557">
    <property type="entry name" value="L-lactate/malate_DH"/>
</dbReference>
<dbReference type="InterPro" id="IPR022383">
    <property type="entry name" value="Lactate/malate_DH_C"/>
</dbReference>
<dbReference type="InterPro" id="IPR001236">
    <property type="entry name" value="Lactate/malate_DH_N"/>
</dbReference>
<dbReference type="InterPro" id="IPR015955">
    <property type="entry name" value="Lactate_DH/Glyco_Ohase_4_C"/>
</dbReference>
<dbReference type="InterPro" id="IPR001252">
    <property type="entry name" value="Malate_DH_AS"/>
</dbReference>
<dbReference type="InterPro" id="IPR010945">
    <property type="entry name" value="Malate_DH_type2"/>
</dbReference>
<dbReference type="InterPro" id="IPR036291">
    <property type="entry name" value="NAD(P)-bd_dom_sf"/>
</dbReference>
<dbReference type="NCBIfam" id="TIGR01759">
    <property type="entry name" value="MalateDH-SF1"/>
    <property type="match status" value="1"/>
</dbReference>
<dbReference type="NCBIfam" id="NF003916">
    <property type="entry name" value="PRK05442.1"/>
    <property type="match status" value="1"/>
</dbReference>
<dbReference type="PANTHER" id="PTHR23382">
    <property type="entry name" value="MALATE DEHYDROGENASE"/>
    <property type="match status" value="1"/>
</dbReference>
<dbReference type="Pfam" id="PF02866">
    <property type="entry name" value="Ldh_1_C"/>
    <property type="match status" value="1"/>
</dbReference>
<dbReference type="Pfam" id="PF00056">
    <property type="entry name" value="Ldh_1_N"/>
    <property type="match status" value="1"/>
</dbReference>
<dbReference type="PIRSF" id="PIRSF000102">
    <property type="entry name" value="Lac_mal_DH"/>
    <property type="match status" value="1"/>
</dbReference>
<dbReference type="SUPFAM" id="SSF56327">
    <property type="entry name" value="LDH C-terminal domain-like"/>
    <property type="match status" value="1"/>
</dbReference>
<dbReference type="SUPFAM" id="SSF51735">
    <property type="entry name" value="NAD(P)-binding Rossmann-fold domains"/>
    <property type="match status" value="1"/>
</dbReference>
<dbReference type="PROSITE" id="PS00068">
    <property type="entry name" value="MDH"/>
    <property type="match status" value="1"/>
</dbReference>
<sequence length="329" mass="34631">MSASPLKVAVTGAAGQIGYSLLFRLASGSLLGPDRPIELRLLEIEPALKALEGVVMELDDCAFPLLSGVEIGADPNKIFDGANLALLVGARPRGPGMERSDLLEANGAIFTAQGKALNEVAADDIRVGVTGNPANTNALIAMSNAPDIPRERFSALTRLDHNRAISQLAKKTGAKVTDIKKMTIWGNHSATQYPDIFHAEVKGKNAAEVVGDQNWIENDFIPTVAKRGAAIIDARGASSAASAASATTDAARDWLLGTPAGDWVSMAVISDGSYGVPEGLISSFPVTTKDGDWTIVQGLEIDEFSRSRIDKTTAELADERNAVTQLGLI</sequence>
<protein>
    <recommendedName>
        <fullName evidence="1">Malate dehydrogenase</fullName>
        <ecNumber evidence="1">1.1.1.37</ecNumber>
    </recommendedName>
</protein>
<organism>
    <name type="scientific">Mycolicibacterium paratuberculosis (strain ATCC BAA-968 / K-10)</name>
    <name type="common">Mycobacterium paratuberculosis</name>
    <dbReference type="NCBI Taxonomy" id="262316"/>
    <lineage>
        <taxon>Bacteria</taxon>
        <taxon>Bacillati</taxon>
        <taxon>Actinomycetota</taxon>
        <taxon>Actinomycetes</taxon>
        <taxon>Mycobacteriales</taxon>
        <taxon>Mycobacteriaceae</taxon>
        <taxon>Mycobacterium</taxon>
        <taxon>Mycobacterium avium complex (MAC)</taxon>
    </lineage>
</organism>
<keyword id="KW-0520">NAD</keyword>
<keyword id="KW-0560">Oxidoreductase</keyword>
<keyword id="KW-1185">Reference proteome</keyword>
<keyword id="KW-0816">Tricarboxylic acid cycle</keyword>